<reference key="1">
    <citation type="submission" date="2008-05" db="EMBL/GenBank/DDBJ databases">
        <title>Complete sequence of Shigella boydii serotype 18 strain BS512.</title>
        <authorList>
            <person name="Rasko D.A."/>
            <person name="Rosovitz M."/>
            <person name="Maurelli A.T."/>
            <person name="Myers G."/>
            <person name="Seshadri R."/>
            <person name="Cer R."/>
            <person name="Jiang L."/>
            <person name="Ravel J."/>
            <person name="Sebastian Y."/>
        </authorList>
    </citation>
    <scope>NUCLEOTIDE SEQUENCE [LARGE SCALE GENOMIC DNA]</scope>
    <source>
        <strain>CDC 3083-94 / BS512</strain>
    </source>
</reference>
<sequence>MIKYALVGDVGGTNARLALCDIASGEISQAKTYSGLDYPSLEAVIRVYLEEHKVEVKDGCIAIACPITGDWVAMTNHTWAFSIAEMKKNLGFSHLEIINDFTAVSMAIPMLKKEHLIQFGGAEPVEGKPIAVYGAGTGLGVAHLVHVDKRWVSLPGEGGHVDFAPNSEEEAIILEILRAEIGHVSAERVLSGPGLVNLYRAIVKADNRLPENLKPKDITERALADSCTDCRRALSLFCVIMGRFGGNLALNLGTFGGVFIAGGIVPRFLEFFKASGFRAAFEDKGRFKEYVHDIPVYLIVHDNPGLLGSGAHLRQTLGHIL</sequence>
<feature type="chain" id="PRO_1000127725" description="Glucokinase">
    <location>
        <begin position="1"/>
        <end position="321"/>
    </location>
</feature>
<feature type="binding site" evidence="1">
    <location>
        <begin position="8"/>
        <end position="13"/>
    </location>
    <ligand>
        <name>ATP</name>
        <dbReference type="ChEBI" id="CHEBI:30616"/>
    </ligand>
</feature>
<evidence type="ECO:0000255" key="1">
    <source>
        <dbReference type="HAMAP-Rule" id="MF_00524"/>
    </source>
</evidence>
<proteinExistence type="inferred from homology"/>
<protein>
    <recommendedName>
        <fullName evidence="1">Glucokinase</fullName>
        <ecNumber evidence="1">2.7.1.2</ecNumber>
    </recommendedName>
    <alternativeName>
        <fullName evidence="1">Glucose kinase</fullName>
    </alternativeName>
</protein>
<comment type="catalytic activity">
    <reaction evidence="1">
        <text>D-glucose + ATP = D-glucose 6-phosphate + ADP + H(+)</text>
        <dbReference type="Rhea" id="RHEA:17825"/>
        <dbReference type="ChEBI" id="CHEBI:4167"/>
        <dbReference type="ChEBI" id="CHEBI:15378"/>
        <dbReference type="ChEBI" id="CHEBI:30616"/>
        <dbReference type="ChEBI" id="CHEBI:61548"/>
        <dbReference type="ChEBI" id="CHEBI:456216"/>
        <dbReference type="EC" id="2.7.1.2"/>
    </reaction>
</comment>
<comment type="subcellular location">
    <subcellularLocation>
        <location evidence="1">Cytoplasm</location>
    </subcellularLocation>
</comment>
<comment type="similarity">
    <text evidence="1">Belongs to the bacterial glucokinase family.</text>
</comment>
<keyword id="KW-0067">ATP-binding</keyword>
<keyword id="KW-0963">Cytoplasm</keyword>
<keyword id="KW-0324">Glycolysis</keyword>
<keyword id="KW-0418">Kinase</keyword>
<keyword id="KW-0547">Nucleotide-binding</keyword>
<keyword id="KW-1185">Reference proteome</keyword>
<keyword id="KW-0808">Transferase</keyword>
<dbReference type="EC" id="2.7.1.2" evidence="1"/>
<dbReference type="EMBL" id="CP001063">
    <property type="protein sequence ID" value="ACD06689.1"/>
    <property type="molecule type" value="Genomic_DNA"/>
</dbReference>
<dbReference type="RefSeq" id="WP_000598932.1">
    <property type="nucleotide sequence ID" value="NC_010658.1"/>
</dbReference>
<dbReference type="SMR" id="B2TWY5"/>
<dbReference type="STRING" id="344609.SbBS512_E2757"/>
<dbReference type="KEGG" id="sbc:SbBS512_E2757"/>
<dbReference type="HOGENOM" id="CLU_042582_1_0_6"/>
<dbReference type="Proteomes" id="UP000001030">
    <property type="component" value="Chromosome"/>
</dbReference>
<dbReference type="GO" id="GO:0005829">
    <property type="term" value="C:cytosol"/>
    <property type="evidence" value="ECO:0007669"/>
    <property type="project" value="TreeGrafter"/>
</dbReference>
<dbReference type="GO" id="GO:0005524">
    <property type="term" value="F:ATP binding"/>
    <property type="evidence" value="ECO:0007669"/>
    <property type="project" value="UniProtKB-UniRule"/>
</dbReference>
<dbReference type="GO" id="GO:0005536">
    <property type="term" value="F:D-glucose binding"/>
    <property type="evidence" value="ECO:0007669"/>
    <property type="project" value="InterPro"/>
</dbReference>
<dbReference type="GO" id="GO:0004340">
    <property type="term" value="F:glucokinase activity"/>
    <property type="evidence" value="ECO:0007669"/>
    <property type="project" value="UniProtKB-UniRule"/>
</dbReference>
<dbReference type="GO" id="GO:0006096">
    <property type="term" value="P:glycolytic process"/>
    <property type="evidence" value="ECO:0007669"/>
    <property type="project" value="UniProtKB-UniRule"/>
</dbReference>
<dbReference type="CDD" id="cd24008">
    <property type="entry name" value="ASKHA_NBD_GLK"/>
    <property type="match status" value="1"/>
</dbReference>
<dbReference type="FunFam" id="3.30.420.40:FF:000045">
    <property type="entry name" value="Glucokinase"/>
    <property type="match status" value="1"/>
</dbReference>
<dbReference type="FunFam" id="3.40.367.20:FF:000002">
    <property type="entry name" value="Glucokinase"/>
    <property type="match status" value="1"/>
</dbReference>
<dbReference type="Gene3D" id="3.30.420.40">
    <property type="match status" value="1"/>
</dbReference>
<dbReference type="Gene3D" id="3.40.367.20">
    <property type="match status" value="1"/>
</dbReference>
<dbReference type="HAMAP" id="MF_00524">
    <property type="entry name" value="Glucokinase"/>
    <property type="match status" value="1"/>
</dbReference>
<dbReference type="InterPro" id="IPR043129">
    <property type="entry name" value="ATPase_NBD"/>
</dbReference>
<dbReference type="InterPro" id="IPR050201">
    <property type="entry name" value="Bacterial_glucokinase"/>
</dbReference>
<dbReference type="InterPro" id="IPR003836">
    <property type="entry name" value="Glucokinase"/>
</dbReference>
<dbReference type="NCBIfam" id="TIGR00749">
    <property type="entry name" value="glk"/>
    <property type="match status" value="1"/>
</dbReference>
<dbReference type="NCBIfam" id="NF001414">
    <property type="entry name" value="PRK00292.1-1"/>
    <property type="match status" value="1"/>
</dbReference>
<dbReference type="NCBIfam" id="NF001416">
    <property type="entry name" value="PRK00292.1-3"/>
    <property type="match status" value="1"/>
</dbReference>
<dbReference type="PANTHER" id="PTHR47690">
    <property type="entry name" value="GLUCOKINASE"/>
    <property type="match status" value="1"/>
</dbReference>
<dbReference type="PANTHER" id="PTHR47690:SF1">
    <property type="entry name" value="GLUCOKINASE"/>
    <property type="match status" value="1"/>
</dbReference>
<dbReference type="Pfam" id="PF02685">
    <property type="entry name" value="Glucokinase"/>
    <property type="match status" value="1"/>
</dbReference>
<dbReference type="SUPFAM" id="SSF53067">
    <property type="entry name" value="Actin-like ATPase domain"/>
    <property type="match status" value="1"/>
</dbReference>
<name>GLK_SHIB3</name>
<accession>B2TWY5</accession>
<gene>
    <name evidence="1" type="primary">glk</name>
    <name type="ordered locus">SbBS512_E2757</name>
</gene>
<organism>
    <name type="scientific">Shigella boydii serotype 18 (strain CDC 3083-94 / BS512)</name>
    <dbReference type="NCBI Taxonomy" id="344609"/>
    <lineage>
        <taxon>Bacteria</taxon>
        <taxon>Pseudomonadati</taxon>
        <taxon>Pseudomonadota</taxon>
        <taxon>Gammaproteobacteria</taxon>
        <taxon>Enterobacterales</taxon>
        <taxon>Enterobacteriaceae</taxon>
        <taxon>Shigella</taxon>
    </lineage>
</organism>